<dbReference type="EMBL" id="X77197">
    <property type="protein sequence ID" value="CAA54417.1"/>
    <property type="molecule type" value="mRNA"/>
</dbReference>
<dbReference type="EMBL" id="AB019432">
    <property type="protein sequence ID" value="BAA77327.1"/>
    <property type="molecule type" value="mRNA"/>
</dbReference>
<dbReference type="EMBL" id="AF170492">
    <property type="protein sequence ID" value="AAD50981.1"/>
    <property type="molecule type" value="mRNA"/>
</dbReference>
<dbReference type="EMBL" id="AK289564">
    <property type="protein sequence ID" value="BAF82253.1"/>
    <property type="molecule type" value="mRNA"/>
</dbReference>
<dbReference type="EMBL" id="AK299611">
    <property type="protein sequence ID" value="BAH13080.1"/>
    <property type="molecule type" value="mRNA"/>
</dbReference>
<dbReference type="EMBL" id="AC003666">
    <property type="status" value="NOT_ANNOTATED_CDS"/>
    <property type="molecule type" value="Genomic_DNA"/>
</dbReference>
<dbReference type="EMBL" id="AC121345">
    <property type="status" value="NOT_ANNOTATED_CDS"/>
    <property type="molecule type" value="Genomic_DNA"/>
</dbReference>
<dbReference type="EMBL" id="CH471074">
    <property type="protein sequence ID" value="EAW98778.1"/>
    <property type="molecule type" value="Genomic_DNA"/>
</dbReference>
<dbReference type="EMBL" id="BC130278">
    <property type="protein sequence ID" value="AAI30279.1"/>
    <property type="molecule type" value="mRNA"/>
</dbReference>
<dbReference type="CCDS" id="CCDS14137.1">
    <molecule id="P51793-1"/>
</dbReference>
<dbReference type="CCDS" id="CCDS59159.1">
    <molecule id="P51793-2"/>
</dbReference>
<dbReference type="PIR" id="I37242">
    <property type="entry name" value="I37242"/>
</dbReference>
<dbReference type="RefSeq" id="NP_001243873.1">
    <molecule id="P51793-2"/>
    <property type="nucleotide sequence ID" value="NM_001256944.2"/>
</dbReference>
<dbReference type="RefSeq" id="NP_001821.2">
    <molecule id="P51793-1"/>
    <property type="nucleotide sequence ID" value="NM_001830.4"/>
</dbReference>
<dbReference type="SMR" id="P51793"/>
<dbReference type="BioGRID" id="107597">
    <property type="interactions" value="4"/>
</dbReference>
<dbReference type="FunCoup" id="P51793">
    <property type="interactions" value="1360"/>
</dbReference>
<dbReference type="IntAct" id="P51793">
    <property type="interactions" value="3"/>
</dbReference>
<dbReference type="STRING" id="9606.ENSP00000370213"/>
<dbReference type="GuidetoPHARMACOLOGY" id="703"/>
<dbReference type="TCDB" id="2.A.49.2.8">
    <property type="family name" value="the chloride carrier/channel (clc) family"/>
</dbReference>
<dbReference type="GlyGen" id="P51793">
    <property type="glycosylation" value="1 site"/>
</dbReference>
<dbReference type="iPTMnet" id="P51793"/>
<dbReference type="PhosphoSitePlus" id="P51793"/>
<dbReference type="BioMuta" id="CLCN4"/>
<dbReference type="DMDM" id="20141247"/>
<dbReference type="jPOST" id="P51793"/>
<dbReference type="MassIVE" id="P51793"/>
<dbReference type="PaxDb" id="9606-ENSP00000370213"/>
<dbReference type="PeptideAtlas" id="P51793"/>
<dbReference type="ProteomicsDB" id="56390">
    <molecule id="P51793-1"/>
</dbReference>
<dbReference type="ProteomicsDB" id="6731"/>
<dbReference type="Pumba" id="P51793"/>
<dbReference type="ABCD" id="P51793">
    <property type="antibodies" value="1 sequenced antibody"/>
</dbReference>
<dbReference type="Antibodypedia" id="23690">
    <property type="antibodies" value="178 antibodies from 30 providers"/>
</dbReference>
<dbReference type="DNASU" id="1183"/>
<dbReference type="Ensembl" id="ENST00000380833.9">
    <molecule id="P51793-1"/>
    <property type="protein sequence ID" value="ENSP00000370213.4"/>
    <property type="gene ID" value="ENSG00000073464.13"/>
</dbReference>
<dbReference type="Ensembl" id="ENST00000674669.1">
    <molecule id="P51793-2"/>
    <property type="protein sequence ID" value="ENSP00000501922.1"/>
    <property type="gene ID" value="ENSG00000073464.13"/>
</dbReference>
<dbReference type="GeneID" id="1183"/>
<dbReference type="KEGG" id="hsa:1183"/>
<dbReference type="MANE-Select" id="ENST00000380833.9">
    <property type="protein sequence ID" value="ENSP00000370213.4"/>
    <property type="RefSeq nucleotide sequence ID" value="NM_001830.4"/>
    <property type="RefSeq protein sequence ID" value="NP_001821.2"/>
</dbReference>
<dbReference type="UCSC" id="uc004csy.5">
    <molecule id="P51793-1"/>
    <property type="organism name" value="human"/>
</dbReference>
<dbReference type="AGR" id="HGNC:2022"/>
<dbReference type="CTD" id="1183"/>
<dbReference type="DisGeNET" id="1183"/>
<dbReference type="GeneCards" id="CLCN4"/>
<dbReference type="GeneReviews" id="CLCN4"/>
<dbReference type="HGNC" id="HGNC:2022">
    <property type="gene designation" value="CLCN4"/>
</dbReference>
<dbReference type="HPA" id="ENSG00000073464">
    <property type="expression patterns" value="Tissue enhanced (brain, retina, skeletal muscle, tongue)"/>
</dbReference>
<dbReference type="MalaCards" id="CLCN4"/>
<dbReference type="MIM" id="300114">
    <property type="type" value="phenotype"/>
</dbReference>
<dbReference type="MIM" id="302910">
    <property type="type" value="gene"/>
</dbReference>
<dbReference type="neXtProt" id="NX_P51793"/>
<dbReference type="OpenTargets" id="ENSG00000073464"/>
<dbReference type="Orphanet" id="485350">
    <property type="disease" value="CLCN4-related X-linked intellectual disability syndrome"/>
</dbReference>
<dbReference type="Orphanet" id="777">
    <property type="disease" value="X-linked non-syndromic intellectual disability"/>
</dbReference>
<dbReference type="PharmGKB" id="PA26549"/>
<dbReference type="VEuPathDB" id="HostDB:ENSG00000073464"/>
<dbReference type="eggNOG" id="KOG0475">
    <property type="taxonomic scope" value="Eukaryota"/>
</dbReference>
<dbReference type="GeneTree" id="ENSGT00940000158265"/>
<dbReference type="HOGENOM" id="CLU_003181_2_1_1"/>
<dbReference type="InParanoid" id="P51793"/>
<dbReference type="OMA" id="TDWVHDT"/>
<dbReference type="OrthoDB" id="44789at2759"/>
<dbReference type="PAN-GO" id="P51793">
    <property type="GO annotations" value="6 GO annotations based on evolutionary models"/>
</dbReference>
<dbReference type="PhylomeDB" id="P51793"/>
<dbReference type="TreeFam" id="TF313867"/>
<dbReference type="PathwayCommons" id="P51793"/>
<dbReference type="Reactome" id="R-HSA-2672351">
    <property type="pathway name" value="Stimuli-sensing channels"/>
</dbReference>
<dbReference type="SignaLink" id="P51793"/>
<dbReference type="SIGNOR" id="P51793"/>
<dbReference type="BioGRID-ORCS" id="1183">
    <property type="hits" value="6 hits in 771 CRISPR screens"/>
</dbReference>
<dbReference type="ChiTaRS" id="CLCN4">
    <property type="organism name" value="human"/>
</dbReference>
<dbReference type="GeneWiki" id="CLCN4"/>
<dbReference type="GenomeRNAi" id="1183"/>
<dbReference type="Pharos" id="P51793">
    <property type="development level" value="Tchem"/>
</dbReference>
<dbReference type="PRO" id="PR:P51793"/>
<dbReference type="Proteomes" id="UP000005640">
    <property type="component" value="Chromosome X"/>
</dbReference>
<dbReference type="RNAct" id="P51793">
    <property type="molecule type" value="protein"/>
</dbReference>
<dbReference type="Bgee" id="ENSG00000073464">
    <property type="expression patterns" value="Expressed in middle temporal gyrus and 169 other cell types or tissues"/>
</dbReference>
<dbReference type="ExpressionAtlas" id="P51793">
    <property type="expression patterns" value="baseline and differential"/>
</dbReference>
<dbReference type="GO" id="GO:0097546">
    <property type="term" value="C:ciliary base"/>
    <property type="evidence" value="ECO:0007669"/>
    <property type="project" value="Ensembl"/>
</dbReference>
<dbReference type="GO" id="GO:0005769">
    <property type="term" value="C:early endosome"/>
    <property type="evidence" value="ECO:0000318"/>
    <property type="project" value="GO_Central"/>
</dbReference>
<dbReference type="GO" id="GO:0031901">
    <property type="term" value="C:early endosome membrane"/>
    <property type="evidence" value="ECO:0007669"/>
    <property type="project" value="UniProtKB-SubCell"/>
</dbReference>
<dbReference type="GO" id="GO:0005789">
    <property type="term" value="C:endoplasmic reticulum membrane"/>
    <property type="evidence" value="ECO:0000314"/>
    <property type="project" value="UniProtKB"/>
</dbReference>
<dbReference type="GO" id="GO:0010008">
    <property type="term" value="C:endosome membrane"/>
    <property type="evidence" value="ECO:0000314"/>
    <property type="project" value="UniProtKB"/>
</dbReference>
<dbReference type="GO" id="GO:0005794">
    <property type="term" value="C:Golgi apparatus"/>
    <property type="evidence" value="ECO:0000318"/>
    <property type="project" value="GO_Central"/>
</dbReference>
<dbReference type="GO" id="GO:0043231">
    <property type="term" value="C:intracellular membrane-bounded organelle"/>
    <property type="evidence" value="ECO:0000314"/>
    <property type="project" value="HPA"/>
</dbReference>
<dbReference type="GO" id="GO:0031902">
    <property type="term" value="C:late endosome membrane"/>
    <property type="evidence" value="ECO:0007669"/>
    <property type="project" value="UniProtKB-SubCell"/>
</dbReference>
<dbReference type="GO" id="GO:0005765">
    <property type="term" value="C:lysosomal membrane"/>
    <property type="evidence" value="ECO:0000314"/>
    <property type="project" value="UniProtKB"/>
</dbReference>
<dbReference type="GO" id="GO:0005886">
    <property type="term" value="C:plasma membrane"/>
    <property type="evidence" value="ECO:0000318"/>
    <property type="project" value="GO_Central"/>
</dbReference>
<dbReference type="GO" id="GO:0055037">
    <property type="term" value="C:recycling endosome"/>
    <property type="evidence" value="ECO:0000314"/>
    <property type="project" value="UniProtKB"/>
</dbReference>
<dbReference type="GO" id="GO:0055038">
    <property type="term" value="C:recycling endosome membrane"/>
    <property type="evidence" value="ECO:0007669"/>
    <property type="project" value="UniProtKB-SubCell"/>
</dbReference>
<dbReference type="GO" id="GO:0008021">
    <property type="term" value="C:synaptic vesicle"/>
    <property type="evidence" value="ECO:0000318"/>
    <property type="project" value="GO_Central"/>
</dbReference>
<dbReference type="GO" id="GO:0015297">
    <property type="term" value="F:antiporter activity"/>
    <property type="evidence" value="ECO:0000314"/>
    <property type="project" value="UniProtKB"/>
</dbReference>
<dbReference type="GO" id="GO:0005524">
    <property type="term" value="F:ATP binding"/>
    <property type="evidence" value="ECO:0007669"/>
    <property type="project" value="UniProtKB-KW"/>
</dbReference>
<dbReference type="GO" id="GO:0005254">
    <property type="term" value="F:chloride channel activity"/>
    <property type="evidence" value="ECO:0000314"/>
    <property type="project" value="MGI"/>
</dbReference>
<dbReference type="GO" id="GO:0005247">
    <property type="term" value="F:voltage-gated chloride channel activity"/>
    <property type="evidence" value="ECO:0000318"/>
    <property type="project" value="GO_Central"/>
</dbReference>
<dbReference type="GO" id="GO:0006821">
    <property type="term" value="P:chloride transport"/>
    <property type="evidence" value="ECO:0000314"/>
    <property type="project" value="MGI"/>
</dbReference>
<dbReference type="GO" id="GO:0034220">
    <property type="term" value="P:monoatomic ion transmembrane transport"/>
    <property type="evidence" value="ECO:0000304"/>
    <property type="project" value="Reactome"/>
</dbReference>
<dbReference type="GO" id="GO:1905515">
    <property type="term" value="P:non-motile cilium assembly"/>
    <property type="evidence" value="ECO:0007669"/>
    <property type="project" value="Ensembl"/>
</dbReference>
<dbReference type="CDD" id="cd04591">
    <property type="entry name" value="CBS_pair_voltage-gated_CLC_euk_bac"/>
    <property type="match status" value="1"/>
</dbReference>
<dbReference type="CDD" id="cd03684">
    <property type="entry name" value="ClC_3_like"/>
    <property type="match status" value="1"/>
</dbReference>
<dbReference type="FunFam" id="3.10.580.20:FF:000001">
    <property type="entry name" value="Chloride channel protein"/>
    <property type="match status" value="1"/>
</dbReference>
<dbReference type="FunFam" id="3.90.1280.20:FF:000001">
    <property type="entry name" value="Chloride channel protein"/>
    <property type="match status" value="1"/>
</dbReference>
<dbReference type="FunFam" id="3.90.1280.20:FF:000002">
    <property type="entry name" value="Chloride channel protein"/>
    <property type="match status" value="1"/>
</dbReference>
<dbReference type="Gene3D" id="3.10.580.20">
    <property type="match status" value="1"/>
</dbReference>
<dbReference type="Gene3D" id="3.90.1280.20">
    <property type="match status" value="1"/>
</dbReference>
<dbReference type="Gene3D" id="1.10.3080.10">
    <property type="entry name" value="Clc chloride channel"/>
    <property type="match status" value="1"/>
</dbReference>
<dbReference type="InterPro" id="IPR000644">
    <property type="entry name" value="CBS_dom"/>
</dbReference>
<dbReference type="InterPro" id="IPR046342">
    <property type="entry name" value="CBS_dom_sf"/>
</dbReference>
<dbReference type="InterPro" id="IPR014743">
    <property type="entry name" value="Cl-channel_core"/>
</dbReference>
<dbReference type="InterPro" id="IPR002246">
    <property type="entry name" value="Cl_channel-4"/>
</dbReference>
<dbReference type="InterPro" id="IPR001807">
    <property type="entry name" value="ClC"/>
</dbReference>
<dbReference type="PANTHER" id="PTHR45711">
    <property type="entry name" value="CHLORIDE CHANNEL PROTEIN"/>
    <property type="match status" value="1"/>
</dbReference>
<dbReference type="PANTHER" id="PTHR45711:SF2">
    <property type="entry name" value="H(+)_CL(-) EXCHANGE TRANSPORTER 4"/>
    <property type="match status" value="1"/>
</dbReference>
<dbReference type="Pfam" id="PF00571">
    <property type="entry name" value="CBS"/>
    <property type="match status" value="2"/>
</dbReference>
<dbReference type="Pfam" id="PF00654">
    <property type="entry name" value="Voltage_CLC"/>
    <property type="match status" value="1"/>
</dbReference>
<dbReference type="PRINTS" id="PR00762">
    <property type="entry name" value="CLCHANNEL"/>
</dbReference>
<dbReference type="PRINTS" id="PR01115">
    <property type="entry name" value="CLCHANNEL4"/>
</dbReference>
<dbReference type="SMART" id="SM00116">
    <property type="entry name" value="CBS"/>
    <property type="match status" value="2"/>
</dbReference>
<dbReference type="SUPFAM" id="SSF54631">
    <property type="entry name" value="CBS-domain pair"/>
    <property type="match status" value="1"/>
</dbReference>
<dbReference type="SUPFAM" id="SSF81340">
    <property type="entry name" value="Clc chloride channel"/>
    <property type="match status" value="1"/>
</dbReference>
<dbReference type="PROSITE" id="PS51371">
    <property type="entry name" value="CBS"/>
    <property type="match status" value="2"/>
</dbReference>
<comment type="function">
    <text evidence="8 9 10 12 13 15">Strongly outwardly rectifying, electrogenic H(+)/Cl(-)exchanger which mediates the exchange of chloride ions against protons (PubMed:18063579, PubMed:23647072, PubMed:25644381, PubMed:27550844, PubMed:28972156). The CLC channel family contains both chloride channels and proton-coupled anion transporters that exchange chloride or another anion for protons (PubMed:29845874). The presence of conserved gating glutamate residues is typical for family members that function as antiporters (PubMed:29845874).</text>
</comment>
<comment type="subunit">
    <text evidence="13">Monomer (PubMed:28972156). Forms heterodimers with CLCN3 (PubMed:28972156).</text>
</comment>
<comment type="interaction">
    <interactant intactId="EBI-22754239">
        <id>P51793</id>
    </interactant>
    <interactant intactId="EBI-2813554">
        <id>Q8WTS1</id>
        <label>ABHD5</label>
    </interactant>
    <organismsDiffer>false</organismsDiffer>
    <experiments>3</experiments>
</comment>
<comment type="subcellular location">
    <subcellularLocation>
        <location evidence="3">Early endosome membrane</location>
        <topology evidence="5">Multi-pass membrane protein</topology>
    </subcellularLocation>
    <subcellularLocation>
        <location evidence="13">Late endosome membrane</location>
        <topology evidence="5">Multi-pass membrane protein</topology>
    </subcellularLocation>
    <subcellularLocation>
        <location evidence="7 13">Endoplasmic reticulum membrane</location>
        <topology evidence="5">Multi-pass membrane protein</topology>
    </subcellularLocation>
    <subcellularLocation>
        <location evidence="13">Lysosome membrane</location>
        <topology evidence="5">Multi-pass membrane protein</topology>
    </subcellularLocation>
    <subcellularLocation>
        <location evidence="13">Recycling endosome membrane</location>
        <topology evidence="5">Multi-pass membrane protein</topology>
    </subcellularLocation>
    <text evidence="13">Localizes to late endosome membrane, lysosome membrane and recycling endosome membrane in the presence of CLCN3.</text>
</comment>
<comment type="alternative products">
    <event type="alternative splicing"/>
    <isoform>
        <id>P51793-1</id>
        <name>1</name>
        <sequence type="displayed"/>
    </isoform>
    <isoform>
        <id>P51793-2</id>
        <name>2</name>
        <sequence type="described" ref="VSP_054658"/>
    </isoform>
</comment>
<comment type="tissue specificity">
    <text>Abundant in skeletal muscle and also detectable in brain and heart.</text>
</comment>
<comment type="disease" evidence="9 10 12">
    <disease id="DI-04808">
        <name>Raynaud-Claes syndrome</name>
        <acronym>MRXSRC</acronym>
        <description>An X-linked syndrome characterized by borderline to severe intellectual disability and impaired language development. Additional features include behavioral problems, psychiatric disorders, seizures, progressive ataxia, brain abnormalities, and facial dysmorphisms.</description>
        <dbReference type="MIM" id="300114"/>
    </disease>
    <text>The disease is caused by variants affecting the gene represented in this entry.</text>
</comment>
<comment type="similarity">
    <text evidence="16">Belongs to the chloride channel (TC 2.A.49) family. ClC-4/CLCN4 subfamily.</text>
</comment>
<evidence type="ECO:0000250" key="1"/>
<evidence type="ECO:0000250" key="2">
    <source>
        <dbReference type="UniProtKB" id="P35523"/>
    </source>
</evidence>
<evidence type="ECO:0000250" key="3">
    <source>
        <dbReference type="UniProtKB" id="P51794"/>
    </source>
</evidence>
<evidence type="ECO:0000250" key="4">
    <source>
        <dbReference type="UniProtKB" id="P51795"/>
    </source>
</evidence>
<evidence type="ECO:0000255" key="5"/>
<evidence type="ECO:0000255" key="6">
    <source>
        <dbReference type="PROSITE-ProRule" id="PRU00703"/>
    </source>
</evidence>
<evidence type="ECO:0000269" key="7">
    <source>
    </source>
</evidence>
<evidence type="ECO:0000269" key="8">
    <source>
    </source>
</evidence>
<evidence type="ECO:0000269" key="9">
    <source>
    </source>
</evidence>
<evidence type="ECO:0000269" key="10">
    <source>
    </source>
</evidence>
<evidence type="ECO:0000269" key="11">
    <source>
    </source>
</evidence>
<evidence type="ECO:0000269" key="12">
    <source>
    </source>
</evidence>
<evidence type="ECO:0000269" key="13">
    <source>
    </source>
</evidence>
<evidence type="ECO:0000303" key="14">
    <source>
    </source>
</evidence>
<evidence type="ECO:0000303" key="15">
    <source>
    </source>
</evidence>
<evidence type="ECO:0000305" key="16"/>
<gene>
    <name type="primary">CLCN4</name>
</gene>
<accession>P51793</accession>
<accession>A1L3U1</accession>
<accession>B7Z5Z4</accession>
<accession>Q9UBU1</accession>
<organism>
    <name type="scientific">Homo sapiens</name>
    <name type="common">Human</name>
    <dbReference type="NCBI Taxonomy" id="9606"/>
    <lineage>
        <taxon>Eukaryota</taxon>
        <taxon>Metazoa</taxon>
        <taxon>Chordata</taxon>
        <taxon>Craniata</taxon>
        <taxon>Vertebrata</taxon>
        <taxon>Euteleostomi</taxon>
        <taxon>Mammalia</taxon>
        <taxon>Eutheria</taxon>
        <taxon>Euarchontoglires</taxon>
        <taxon>Primates</taxon>
        <taxon>Haplorrhini</taxon>
        <taxon>Catarrhini</taxon>
        <taxon>Hominidae</taxon>
        <taxon>Homo</taxon>
    </lineage>
</organism>
<feature type="chain" id="PRO_0000094443" description="H(+)/Cl(-) exchange transporter 4">
    <location>
        <begin position="1"/>
        <end position="760"/>
    </location>
</feature>
<feature type="topological domain" description="Cytoplasmic" evidence="2">
    <location>
        <begin position="1"/>
        <end position="67"/>
    </location>
</feature>
<feature type="transmembrane region" description="Helical" evidence="2">
    <location>
        <begin position="68"/>
        <end position="105"/>
    </location>
</feature>
<feature type="transmembrane region" description="Helical" evidence="2">
    <location>
        <begin position="151"/>
        <end position="174"/>
    </location>
</feature>
<feature type="intramembrane region" description="Helical" evidence="2">
    <location>
        <begin position="183"/>
        <end position="190"/>
    </location>
</feature>
<feature type="transmembrane region" description="Helical" evidence="2">
    <location>
        <begin position="200"/>
        <end position="218"/>
    </location>
</feature>
<feature type="transmembrane region" description="Helical" evidence="2">
    <location>
        <begin position="224"/>
        <end position="243"/>
    </location>
</feature>
<feature type="intramembrane region" description="Helical" evidence="2">
    <location>
        <begin position="255"/>
        <end position="267"/>
    </location>
</feature>
<feature type="intramembrane region" description="Helical" evidence="2">
    <location>
        <begin position="271"/>
        <end position="279"/>
    </location>
</feature>
<feature type="transmembrane region" description="Helical" evidence="2">
    <location>
        <begin position="291"/>
        <end position="309"/>
    </location>
</feature>
<feature type="transmembrane region" description="Helical" evidence="2">
    <location>
        <begin position="333"/>
        <end position="358"/>
    </location>
</feature>
<feature type="transmembrane region" description="Helical" evidence="2">
    <location>
        <begin position="365"/>
        <end position="385"/>
    </location>
</feature>
<feature type="transmembrane region" description="Helical" evidence="2">
    <location>
        <begin position="442"/>
        <end position="462"/>
    </location>
</feature>
<feature type="transmembrane region" description="Helical" evidence="2">
    <location>
        <begin position="467"/>
        <end position="486"/>
    </location>
</feature>
<feature type="intramembrane region" description="Helical" evidence="2">
    <location>
        <begin position="514"/>
        <end position="528"/>
    </location>
</feature>
<feature type="intramembrane region" description="Helical" evidence="2">
    <location>
        <begin position="532"/>
        <end position="543"/>
    </location>
</feature>
<feature type="intramembrane region" description="Note=Loop between two helices" evidence="2">
    <location>
        <begin position="544"/>
        <end position="547"/>
    </location>
</feature>
<feature type="transmembrane region" description="Helical" evidence="2">
    <location>
        <begin position="548"/>
        <end position="566"/>
    </location>
</feature>
<feature type="topological domain" description="Cytoplasmic" evidence="2">
    <location>
        <begin position="567"/>
        <end position="760"/>
    </location>
</feature>
<feature type="domain" description="CBS 1" evidence="6">
    <location>
        <begin position="600"/>
        <end position="666"/>
    </location>
</feature>
<feature type="domain" description="CBS 2" evidence="6">
    <location>
        <begin position="697"/>
        <end position="755"/>
    </location>
</feature>
<feature type="region of interest" description="Required for localization in the endoplasmic reticulum" evidence="7">
    <location>
        <begin position="14"/>
        <end position="63"/>
    </location>
</feature>
<feature type="region of interest" description="Required for localization in the endoplasmic reticulum" evidence="13">
    <location>
        <begin position="667"/>
        <end position="696"/>
    </location>
</feature>
<feature type="short sequence motif" description="Selectivity filter part_1" evidence="1">
    <location>
        <begin position="180"/>
        <end position="184"/>
    </location>
</feature>
<feature type="short sequence motif" description="Selectivity filter part_2" evidence="1">
    <location>
        <begin position="222"/>
        <end position="226"/>
    </location>
</feature>
<feature type="short sequence motif" description="Selectivity filter part_3" evidence="1">
    <location>
        <begin position="467"/>
        <end position="471"/>
    </location>
</feature>
<feature type="binding site" evidence="1">
    <location>
        <position position="181"/>
    </location>
    <ligand>
        <name>chloride</name>
        <dbReference type="ChEBI" id="CHEBI:17996"/>
    </ligand>
</feature>
<feature type="binding site" evidence="1">
    <location>
        <position position="469"/>
    </location>
    <ligand>
        <name>chloride</name>
        <dbReference type="ChEBI" id="CHEBI:17996"/>
    </ligand>
</feature>
<feature type="binding site" evidence="1">
    <location>
        <position position="572"/>
    </location>
    <ligand>
        <name>chloride</name>
        <dbReference type="ChEBI" id="CHEBI:17996"/>
    </ligand>
</feature>
<feature type="binding site" evidence="1">
    <location>
        <position position="610"/>
    </location>
    <ligand>
        <name>ATP</name>
        <dbReference type="ChEBI" id="CHEBI:30616"/>
    </ligand>
</feature>
<feature type="binding site" evidence="4">
    <location>
        <begin position="631"/>
        <end position="633"/>
    </location>
    <ligand>
        <name>ATP</name>
        <dbReference type="ChEBI" id="CHEBI:30616"/>
    </ligand>
</feature>
<feature type="binding site" evidence="4">
    <location>
        <begin position="738"/>
        <end position="741"/>
    </location>
    <ligand>
        <name>ATP</name>
        <dbReference type="ChEBI" id="CHEBI:30616"/>
    </ligand>
</feature>
<feature type="site" description="Mediates proton transfer from the outer aqueous phase to the interior of the protein; involved in linking H(+) and Cl(-) transport">
    <location>
        <position position="224"/>
    </location>
</feature>
<feature type="site" description="Mediates proton transfer from the protein to the inner aqueous phase">
    <location>
        <position position="281"/>
    </location>
</feature>
<feature type="splice variant" id="VSP_054658" description="In isoform 2." evidence="14">
    <location>
        <begin position="1"/>
        <end position="94"/>
    </location>
</feature>
<feature type="sequence variant" id="VAR_083577" description="In MRXSRC; uncertain significance; no reduction in outwardly-rectifying currents; does not affect its localization in endoplasmic reticulum membrane; dbSNP:rs879255591." evidence="11 12">
    <original>D</original>
    <variation>N</variation>
    <location>
        <position position="15"/>
    </location>
</feature>
<feature type="sequence variant" id="VAR_077819" description="In MRXSRC; marked reduction in outwardly-rectifying currents; dbSNP:rs1569226551." evidence="10 12">
    <original>G</original>
    <variation>S</variation>
    <location>
        <position position="78"/>
    </location>
</feature>
<feature type="sequence variant" id="VAR_083578" description="In MRXSRC; marked reduction in outwardly-rectifying currents; does not affect its localization in endoplasmic reticulum membrane; dbSNP:rs879255580." evidence="12">
    <original>V</original>
    <variation>G</variation>
    <location>
        <position position="212"/>
    </location>
</feature>
<feature type="sequence variant" id="VAR_083579" description="In MRXSRC; marked reduction in outwardly-rectifying currents; does not affect its localization in endoplasmic reticulum membrane; dbSNP:rs879255581." evidence="12">
    <original>L</original>
    <variation>P</variation>
    <location>
        <position position="221"/>
    </location>
</feature>
<feature type="sequence variant" id="VAR_077820" description="In MRXSRC; marked reduction in outwardly-rectifying currents; dbSNP:rs1569230006." evidence="10 12">
    <original>L</original>
    <variation>V</variation>
    <location>
        <position position="221"/>
    </location>
</feature>
<feature type="sequence variant" id="VAR_083580" description="In MRXSRC; marked reduction in outwardly-rectifying currents; does not affect its localization in endoplasmic reticulum; dbSNP:rs879255585." evidence="12">
    <original>V</original>
    <variation>M</variation>
    <location>
        <position position="275"/>
    </location>
</feature>
<feature type="sequence variant" id="VAR_083581" description="In MRXSRC; marked reduction in outwardly-rectifying currents; does not affect its localization in endoplasmic reticulum membrane; dbSNP:rs879255582." evidence="12">
    <original>S</original>
    <variation>L</variation>
    <location>
        <position position="534"/>
    </location>
</feature>
<feature type="sequence variant" id="VAR_077821" description="In MRXSRC; marked reduction in outwardly-rectifying currents; dbSNP:rs1569231897." evidence="10 12">
    <original>V</original>
    <variation>M</variation>
    <location>
        <position position="536"/>
    </location>
</feature>
<feature type="sequence variant" id="VAR_077822" description="In MRXSRC; has normal localization to structures resembling endoplasmic reticulum membranes; almost abolishes the outwardly-rectifying currents; dbSNP:rs587777161." evidence="9 12">
    <original>G</original>
    <variation>R</variation>
    <location>
        <position position="544"/>
    </location>
</feature>
<feature type="sequence variant" id="VAR_083582" description="In MRXSRC; marked reduction in outwardly-rectifying currents; does not affect its localization in endoplasmic reticulum membrane; dbSNP:rs879255583." evidence="12">
    <original>A</original>
    <variation>V</variation>
    <location>
        <position position="555"/>
    </location>
</feature>
<feature type="sequence variant" id="VAR_083583" description="In MRXSRC; marked reduction in outwardly-rectifying currents; does not affect its localization in endoplasmic reticulum membrane; dbSNP:rs879255584." evidence="12">
    <original>R</original>
    <variation>W</variation>
    <location>
        <position position="718"/>
    </location>
</feature>
<feature type="sequence variant" id="VAR_077823" description="In MRXSRC; marked reduction in outwardly-rectifying currents; dbSNP:rs1569233549." evidence="10 12">
    <original>G</original>
    <variation>R</variation>
    <location>
        <position position="731"/>
    </location>
</feature>
<feature type="mutagenesis site" description="Restores chloride translocation, but not proton transport; when associated with A-281." evidence="8">
    <original>E</original>
    <variation>A</variation>
    <location>
        <position position="224"/>
    </location>
</feature>
<feature type="mutagenesis site" description="Abolishes translocation of protons and chloride ions." evidence="8">
    <original>E</original>
    <variation>A</variation>
    <location>
        <position position="281"/>
    </location>
</feature>
<feature type="sequence conflict" description="In Ref. 1; CAA54417." evidence="16" ref="1">
    <original>A</original>
    <variation>R</variation>
    <location>
        <position position="178"/>
    </location>
</feature>
<feature type="sequence conflict" description="In Ref. 1; CAA54417." evidence="16" ref="1">
    <original>II</original>
    <variation>YY</variation>
    <location>
        <begin position="498"/>
        <end position="499"/>
    </location>
</feature>
<feature type="sequence conflict" description="In Ref. 1; CAA54417." evidence="16" ref="1">
    <original>K</original>
    <variation>N</variation>
    <location>
        <position position="659"/>
    </location>
</feature>
<protein>
    <recommendedName>
        <fullName>H(+)/Cl(-) exchange transporter 4</fullName>
    </recommendedName>
    <alternativeName>
        <fullName>Chloride channel protein 4</fullName>
        <shortName>ClC-4</shortName>
    </alternativeName>
    <alternativeName>
        <fullName>Chloride transporter ClC-4</fullName>
    </alternativeName>
</protein>
<name>CLCN4_HUMAN</name>
<keyword id="KW-0025">Alternative splicing</keyword>
<keyword id="KW-0050">Antiport</keyword>
<keyword id="KW-0067">ATP-binding</keyword>
<keyword id="KW-0129">CBS domain</keyword>
<keyword id="KW-0868">Chloride</keyword>
<keyword id="KW-0225">Disease variant</keyword>
<keyword id="KW-0256">Endoplasmic reticulum</keyword>
<keyword id="KW-0967">Endosome</keyword>
<keyword id="KW-0991">Intellectual disability</keyword>
<keyword id="KW-0406">Ion transport</keyword>
<keyword id="KW-0458">Lysosome</keyword>
<keyword id="KW-0472">Membrane</keyword>
<keyword id="KW-0547">Nucleotide-binding</keyword>
<keyword id="KW-1267">Proteomics identification</keyword>
<keyword id="KW-1185">Reference proteome</keyword>
<keyword id="KW-0677">Repeat</keyword>
<keyword id="KW-0812">Transmembrane</keyword>
<keyword id="KW-1133">Transmembrane helix</keyword>
<keyword id="KW-0813">Transport</keyword>
<proteinExistence type="evidence at protein level"/>
<reference key="1">
    <citation type="journal article" date="1994" name="Hum. Mol. Genet.">
        <title>A gene from the Xp22.3 region shares homology with voltage-gated chloride channels.</title>
        <authorList>
            <person name="van Slegtenhorst M.A."/>
            <person name="Bassi M.T."/>
            <person name="Borsani G."/>
            <person name="Wapenaar M.C."/>
            <person name="Ferrero G.B."/>
            <person name="de Conciliis L."/>
            <person name="Rugarli E.I."/>
            <person name="Grillo A."/>
            <person name="Franco B."/>
            <person name="Zoghbi H.Y."/>
            <person name="Ballabio A."/>
        </authorList>
    </citation>
    <scope>NUCLEOTIDE SEQUENCE [MRNA] (ISOFORM 1)</scope>
    <source>
        <tissue>Retina</tissue>
    </source>
</reference>
<reference key="2">
    <citation type="journal article" date="1999" name="Am. J. Physiol.">
        <title>Identification of an acid-activated Cl- channel from human skeletal muscles.</title>
        <authorList>
            <person name="Kawasaki M."/>
            <person name="Fukuma T."/>
            <person name="Yamauchi K."/>
            <person name="Sakamoto H."/>
            <person name="Marumo F."/>
            <person name="Sasaki S."/>
        </authorList>
    </citation>
    <scope>NUCLEOTIDE SEQUENCE [MRNA] (ISOFORM 1)</scope>
    <source>
        <tissue>Skeletal muscle</tissue>
    </source>
</reference>
<reference key="3">
    <citation type="submission" date="1999-07" db="EMBL/GenBank/DDBJ databases">
        <title>A chloride channel (ClC-4) in human lens epithelium.</title>
        <authorList>
            <person name="Rae J.L."/>
        </authorList>
    </citation>
    <scope>NUCLEOTIDE SEQUENCE [MRNA] (ISOFORM 1)</scope>
    <source>
        <tissue>Lens epithelium</tissue>
    </source>
</reference>
<reference key="4">
    <citation type="journal article" date="2004" name="Nat. Genet.">
        <title>Complete sequencing and characterization of 21,243 full-length human cDNAs.</title>
        <authorList>
            <person name="Ota T."/>
            <person name="Suzuki Y."/>
            <person name="Nishikawa T."/>
            <person name="Otsuki T."/>
            <person name="Sugiyama T."/>
            <person name="Irie R."/>
            <person name="Wakamatsu A."/>
            <person name="Hayashi K."/>
            <person name="Sato H."/>
            <person name="Nagai K."/>
            <person name="Kimura K."/>
            <person name="Makita H."/>
            <person name="Sekine M."/>
            <person name="Obayashi M."/>
            <person name="Nishi T."/>
            <person name="Shibahara T."/>
            <person name="Tanaka T."/>
            <person name="Ishii S."/>
            <person name="Yamamoto J."/>
            <person name="Saito K."/>
            <person name="Kawai Y."/>
            <person name="Isono Y."/>
            <person name="Nakamura Y."/>
            <person name="Nagahari K."/>
            <person name="Murakami K."/>
            <person name="Yasuda T."/>
            <person name="Iwayanagi T."/>
            <person name="Wagatsuma M."/>
            <person name="Shiratori A."/>
            <person name="Sudo H."/>
            <person name="Hosoiri T."/>
            <person name="Kaku Y."/>
            <person name="Kodaira H."/>
            <person name="Kondo H."/>
            <person name="Sugawara M."/>
            <person name="Takahashi M."/>
            <person name="Kanda K."/>
            <person name="Yokoi T."/>
            <person name="Furuya T."/>
            <person name="Kikkawa E."/>
            <person name="Omura Y."/>
            <person name="Abe K."/>
            <person name="Kamihara K."/>
            <person name="Katsuta N."/>
            <person name="Sato K."/>
            <person name="Tanikawa M."/>
            <person name="Yamazaki M."/>
            <person name="Ninomiya K."/>
            <person name="Ishibashi T."/>
            <person name="Yamashita H."/>
            <person name="Murakawa K."/>
            <person name="Fujimori K."/>
            <person name="Tanai H."/>
            <person name="Kimata M."/>
            <person name="Watanabe M."/>
            <person name="Hiraoka S."/>
            <person name="Chiba Y."/>
            <person name="Ishida S."/>
            <person name="Ono Y."/>
            <person name="Takiguchi S."/>
            <person name="Watanabe S."/>
            <person name="Yosida M."/>
            <person name="Hotuta T."/>
            <person name="Kusano J."/>
            <person name="Kanehori K."/>
            <person name="Takahashi-Fujii A."/>
            <person name="Hara H."/>
            <person name="Tanase T.-O."/>
            <person name="Nomura Y."/>
            <person name="Togiya S."/>
            <person name="Komai F."/>
            <person name="Hara R."/>
            <person name="Takeuchi K."/>
            <person name="Arita M."/>
            <person name="Imose N."/>
            <person name="Musashino K."/>
            <person name="Yuuki H."/>
            <person name="Oshima A."/>
            <person name="Sasaki N."/>
            <person name="Aotsuka S."/>
            <person name="Yoshikawa Y."/>
            <person name="Matsunawa H."/>
            <person name="Ichihara T."/>
            <person name="Shiohata N."/>
            <person name="Sano S."/>
            <person name="Moriya S."/>
            <person name="Momiyama H."/>
            <person name="Satoh N."/>
            <person name="Takami S."/>
            <person name="Terashima Y."/>
            <person name="Suzuki O."/>
            <person name="Nakagawa S."/>
            <person name="Senoh A."/>
            <person name="Mizoguchi H."/>
            <person name="Goto Y."/>
            <person name="Shimizu F."/>
            <person name="Wakebe H."/>
            <person name="Hishigaki H."/>
            <person name="Watanabe T."/>
            <person name="Sugiyama A."/>
            <person name="Takemoto M."/>
            <person name="Kawakami B."/>
            <person name="Yamazaki M."/>
            <person name="Watanabe K."/>
            <person name="Kumagai A."/>
            <person name="Itakura S."/>
            <person name="Fukuzumi Y."/>
            <person name="Fujimori Y."/>
            <person name="Komiyama M."/>
            <person name="Tashiro H."/>
            <person name="Tanigami A."/>
            <person name="Fujiwara T."/>
            <person name="Ono T."/>
            <person name="Yamada K."/>
            <person name="Fujii Y."/>
            <person name="Ozaki K."/>
            <person name="Hirao M."/>
            <person name="Ohmori Y."/>
            <person name="Kawabata A."/>
            <person name="Hikiji T."/>
            <person name="Kobatake N."/>
            <person name="Inagaki H."/>
            <person name="Ikema Y."/>
            <person name="Okamoto S."/>
            <person name="Okitani R."/>
            <person name="Kawakami T."/>
            <person name="Noguchi S."/>
            <person name="Itoh T."/>
            <person name="Shigeta K."/>
            <person name="Senba T."/>
            <person name="Matsumura K."/>
            <person name="Nakajima Y."/>
            <person name="Mizuno T."/>
            <person name="Morinaga M."/>
            <person name="Sasaki M."/>
            <person name="Togashi T."/>
            <person name="Oyama M."/>
            <person name="Hata H."/>
            <person name="Watanabe M."/>
            <person name="Komatsu T."/>
            <person name="Mizushima-Sugano J."/>
            <person name="Satoh T."/>
            <person name="Shirai Y."/>
            <person name="Takahashi Y."/>
            <person name="Nakagawa K."/>
            <person name="Okumura K."/>
            <person name="Nagase T."/>
            <person name="Nomura N."/>
            <person name="Kikuchi H."/>
            <person name="Masuho Y."/>
            <person name="Yamashita R."/>
            <person name="Nakai K."/>
            <person name="Yada T."/>
            <person name="Nakamura Y."/>
            <person name="Ohara O."/>
            <person name="Isogai T."/>
            <person name="Sugano S."/>
        </authorList>
    </citation>
    <scope>NUCLEOTIDE SEQUENCE [LARGE SCALE MRNA] (ISOFORMS 1 AND 2)</scope>
    <source>
        <tissue>Brain</tissue>
        <tissue>Cerebellum</tissue>
    </source>
</reference>
<reference key="5">
    <citation type="journal article" date="2005" name="Nature">
        <title>The DNA sequence of the human X chromosome.</title>
        <authorList>
            <person name="Ross M.T."/>
            <person name="Grafham D.V."/>
            <person name="Coffey A.J."/>
            <person name="Scherer S."/>
            <person name="McLay K."/>
            <person name="Muzny D."/>
            <person name="Platzer M."/>
            <person name="Howell G.R."/>
            <person name="Burrows C."/>
            <person name="Bird C.P."/>
            <person name="Frankish A."/>
            <person name="Lovell F.L."/>
            <person name="Howe K.L."/>
            <person name="Ashurst J.L."/>
            <person name="Fulton R.S."/>
            <person name="Sudbrak R."/>
            <person name="Wen G."/>
            <person name="Jones M.C."/>
            <person name="Hurles M.E."/>
            <person name="Andrews T.D."/>
            <person name="Scott C.E."/>
            <person name="Searle S."/>
            <person name="Ramser J."/>
            <person name="Whittaker A."/>
            <person name="Deadman R."/>
            <person name="Carter N.P."/>
            <person name="Hunt S.E."/>
            <person name="Chen R."/>
            <person name="Cree A."/>
            <person name="Gunaratne P."/>
            <person name="Havlak P."/>
            <person name="Hodgson A."/>
            <person name="Metzker M.L."/>
            <person name="Richards S."/>
            <person name="Scott G."/>
            <person name="Steffen D."/>
            <person name="Sodergren E."/>
            <person name="Wheeler D.A."/>
            <person name="Worley K.C."/>
            <person name="Ainscough R."/>
            <person name="Ambrose K.D."/>
            <person name="Ansari-Lari M.A."/>
            <person name="Aradhya S."/>
            <person name="Ashwell R.I."/>
            <person name="Babbage A.K."/>
            <person name="Bagguley C.L."/>
            <person name="Ballabio A."/>
            <person name="Banerjee R."/>
            <person name="Barker G.E."/>
            <person name="Barlow K.F."/>
            <person name="Barrett I.P."/>
            <person name="Bates K.N."/>
            <person name="Beare D.M."/>
            <person name="Beasley H."/>
            <person name="Beasley O."/>
            <person name="Beck A."/>
            <person name="Bethel G."/>
            <person name="Blechschmidt K."/>
            <person name="Brady N."/>
            <person name="Bray-Allen S."/>
            <person name="Bridgeman A.M."/>
            <person name="Brown A.J."/>
            <person name="Brown M.J."/>
            <person name="Bonnin D."/>
            <person name="Bruford E.A."/>
            <person name="Buhay C."/>
            <person name="Burch P."/>
            <person name="Burford D."/>
            <person name="Burgess J."/>
            <person name="Burrill W."/>
            <person name="Burton J."/>
            <person name="Bye J.M."/>
            <person name="Carder C."/>
            <person name="Carrel L."/>
            <person name="Chako J."/>
            <person name="Chapman J.C."/>
            <person name="Chavez D."/>
            <person name="Chen E."/>
            <person name="Chen G."/>
            <person name="Chen Y."/>
            <person name="Chen Z."/>
            <person name="Chinault C."/>
            <person name="Ciccodicola A."/>
            <person name="Clark S.Y."/>
            <person name="Clarke G."/>
            <person name="Clee C.M."/>
            <person name="Clegg S."/>
            <person name="Clerc-Blankenburg K."/>
            <person name="Clifford K."/>
            <person name="Cobley V."/>
            <person name="Cole C.G."/>
            <person name="Conquer J.S."/>
            <person name="Corby N."/>
            <person name="Connor R.E."/>
            <person name="David R."/>
            <person name="Davies J."/>
            <person name="Davis C."/>
            <person name="Davis J."/>
            <person name="Delgado O."/>
            <person name="Deshazo D."/>
            <person name="Dhami P."/>
            <person name="Ding Y."/>
            <person name="Dinh H."/>
            <person name="Dodsworth S."/>
            <person name="Draper H."/>
            <person name="Dugan-Rocha S."/>
            <person name="Dunham A."/>
            <person name="Dunn M."/>
            <person name="Durbin K.J."/>
            <person name="Dutta I."/>
            <person name="Eades T."/>
            <person name="Ellwood M."/>
            <person name="Emery-Cohen A."/>
            <person name="Errington H."/>
            <person name="Evans K.L."/>
            <person name="Faulkner L."/>
            <person name="Francis F."/>
            <person name="Frankland J."/>
            <person name="Fraser A.E."/>
            <person name="Galgoczy P."/>
            <person name="Gilbert J."/>
            <person name="Gill R."/>
            <person name="Gloeckner G."/>
            <person name="Gregory S.G."/>
            <person name="Gribble S."/>
            <person name="Griffiths C."/>
            <person name="Grocock R."/>
            <person name="Gu Y."/>
            <person name="Gwilliam R."/>
            <person name="Hamilton C."/>
            <person name="Hart E.A."/>
            <person name="Hawes A."/>
            <person name="Heath P.D."/>
            <person name="Heitmann K."/>
            <person name="Hennig S."/>
            <person name="Hernandez J."/>
            <person name="Hinzmann B."/>
            <person name="Ho S."/>
            <person name="Hoffs M."/>
            <person name="Howden P.J."/>
            <person name="Huckle E.J."/>
            <person name="Hume J."/>
            <person name="Hunt P.J."/>
            <person name="Hunt A.R."/>
            <person name="Isherwood J."/>
            <person name="Jacob L."/>
            <person name="Johnson D."/>
            <person name="Jones S."/>
            <person name="de Jong P.J."/>
            <person name="Joseph S.S."/>
            <person name="Keenan S."/>
            <person name="Kelly S."/>
            <person name="Kershaw J.K."/>
            <person name="Khan Z."/>
            <person name="Kioschis P."/>
            <person name="Klages S."/>
            <person name="Knights A.J."/>
            <person name="Kosiura A."/>
            <person name="Kovar-Smith C."/>
            <person name="Laird G.K."/>
            <person name="Langford C."/>
            <person name="Lawlor S."/>
            <person name="Leversha M."/>
            <person name="Lewis L."/>
            <person name="Liu W."/>
            <person name="Lloyd C."/>
            <person name="Lloyd D.M."/>
            <person name="Loulseged H."/>
            <person name="Loveland J.E."/>
            <person name="Lovell J.D."/>
            <person name="Lozado R."/>
            <person name="Lu J."/>
            <person name="Lyne R."/>
            <person name="Ma J."/>
            <person name="Maheshwari M."/>
            <person name="Matthews L.H."/>
            <person name="McDowall J."/>
            <person name="McLaren S."/>
            <person name="McMurray A."/>
            <person name="Meidl P."/>
            <person name="Meitinger T."/>
            <person name="Milne S."/>
            <person name="Miner G."/>
            <person name="Mistry S.L."/>
            <person name="Morgan M."/>
            <person name="Morris S."/>
            <person name="Mueller I."/>
            <person name="Mullikin J.C."/>
            <person name="Nguyen N."/>
            <person name="Nordsiek G."/>
            <person name="Nyakatura G."/>
            <person name="O'dell C.N."/>
            <person name="Okwuonu G."/>
            <person name="Palmer S."/>
            <person name="Pandian R."/>
            <person name="Parker D."/>
            <person name="Parrish J."/>
            <person name="Pasternak S."/>
            <person name="Patel D."/>
            <person name="Pearce A.V."/>
            <person name="Pearson D.M."/>
            <person name="Pelan S.E."/>
            <person name="Perez L."/>
            <person name="Porter K.M."/>
            <person name="Ramsey Y."/>
            <person name="Reichwald K."/>
            <person name="Rhodes S."/>
            <person name="Ridler K.A."/>
            <person name="Schlessinger D."/>
            <person name="Schueler M.G."/>
            <person name="Sehra H.K."/>
            <person name="Shaw-Smith C."/>
            <person name="Shen H."/>
            <person name="Sheridan E.M."/>
            <person name="Shownkeen R."/>
            <person name="Skuce C.D."/>
            <person name="Smith M.L."/>
            <person name="Sotheran E.C."/>
            <person name="Steingruber H.E."/>
            <person name="Steward C.A."/>
            <person name="Storey R."/>
            <person name="Swann R.M."/>
            <person name="Swarbreck D."/>
            <person name="Tabor P.E."/>
            <person name="Taudien S."/>
            <person name="Taylor T."/>
            <person name="Teague B."/>
            <person name="Thomas K."/>
            <person name="Thorpe A."/>
            <person name="Timms K."/>
            <person name="Tracey A."/>
            <person name="Trevanion S."/>
            <person name="Tromans A.C."/>
            <person name="d'Urso M."/>
            <person name="Verduzco D."/>
            <person name="Villasana D."/>
            <person name="Waldron L."/>
            <person name="Wall M."/>
            <person name="Wang Q."/>
            <person name="Warren J."/>
            <person name="Warry G.L."/>
            <person name="Wei X."/>
            <person name="West A."/>
            <person name="Whitehead S.L."/>
            <person name="Whiteley M.N."/>
            <person name="Wilkinson J.E."/>
            <person name="Willey D.L."/>
            <person name="Williams G."/>
            <person name="Williams L."/>
            <person name="Williamson A."/>
            <person name="Williamson H."/>
            <person name="Wilming L."/>
            <person name="Woodmansey R.L."/>
            <person name="Wray P.W."/>
            <person name="Yen J."/>
            <person name="Zhang J."/>
            <person name="Zhou J."/>
            <person name="Zoghbi H."/>
            <person name="Zorilla S."/>
            <person name="Buck D."/>
            <person name="Reinhardt R."/>
            <person name="Poustka A."/>
            <person name="Rosenthal A."/>
            <person name="Lehrach H."/>
            <person name="Meindl A."/>
            <person name="Minx P.J."/>
            <person name="Hillier L.W."/>
            <person name="Willard H.F."/>
            <person name="Wilson R.K."/>
            <person name="Waterston R.H."/>
            <person name="Rice C.M."/>
            <person name="Vaudin M."/>
            <person name="Coulson A."/>
            <person name="Nelson D.L."/>
            <person name="Weinstock G."/>
            <person name="Sulston J.E."/>
            <person name="Durbin R.M."/>
            <person name="Hubbard T."/>
            <person name="Gibbs R.A."/>
            <person name="Beck S."/>
            <person name="Rogers J."/>
            <person name="Bentley D.R."/>
        </authorList>
    </citation>
    <scope>NUCLEOTIDE SEQUENCE [LARGE SCALE GENOMIC DNA]</scope>
</reference>
<reference key="6">
    <citation type="submission" date="2005-07" db="EMBL/GenBank/DDBJ databases">
        <authorList>
            <person name="Mural R.J."/>
            <person name="Istrail S."/>
            <person name="Sutton G."/>
            <person name="Florea L."/>
            <person name="Halpern A.L."/>
            <person name="Mobarry C.M."/>
            <person name="Lippert R."/>
            <person name="Walenz B."/>
            <person name="Shatkay H."/>
            <person name="Dew I."/>
            <person name="Miller J.R."/>
            <person name="Flanigan M.J."/>
            <person name="Edwards N.J."/>
            <person name="Bolanos R."/>
            <person name="Fasulo D."/>
            <person name="Halldorsson B.V."/>
            <person name="Hannenhalli S."/>
            <person name="Turner R."/>
            <person name="Yooseph S."/>
            <person name="Lu F."/>
            <person name="Nusskern D.R."/>
            <person name="Shue B.C."/>
            <person name="Zheng X.H."/>
            <person name="Zhong F."/>
            <person name="Delcher A.L."/>
            <person name="Huson D.H."/>
            <person name="Kravitz S.A."/>
            <person name="Mouchard L."/>
            <person name="Reinert K."/>
            <person name="Remington K.A."/>
            <person name="Clark A.G."/>
            <person name="Waterman M.S."/>
            <person name="Eichler E.E."/>
            <person name="Adams M.D."/>
            <person name="Hunkapiller M.W."/>
            <person name="Myers E.W."/>
            <person name="Venter J.C."/>
        </authorList>
    </citation>
    <scope>NUCLEOTIDE SEQUENCE [LARGE SCALE GENOMIC DNA]</scope>
</reference>
<reference key="7">
    <citation type="journal article" date="2004" name="Genome Res.">
        <title>The status, quality, and expansion of the NIH full-length cDNA project: the Mammalian Gene Collection (MGC).</title>
        <authorList>
            <consortium name="The MGC Project Team"/>
        </authorList>
    </citation>
    <scope>NUCLEOTIDE SEQUENCE [LARGE SCALE MRNA] (ISOFORM 1)</scope>
    <source>
        <tissue>Brain</tissue>
    </source>
</reference>
<reference key="8">
    <citation type="journal article" date="2006" name="FASEB J.">
        <title>The human ClC-4 protein, a member of the CLC chloride channel/transporter family, is localized to the endoplasmic reticulum by its N-terminus.</title>
        <authorList>
            <person name="Okkenhaug H."/>
            <person name="Weylandt K.H."/>
            <person name="Carmena D."/>
            <person name="Wells D.J."/>
            <person name="Higgins C.F."/>
            <person name="Sardini A."/>
        </authorList>
    </citation>
    <scope>SUBCELLULAR LOCATION</scope>
</reference>
<reference key="9">
    <citation type="journal article" date="2008" name="J. Biol. Chem.">
        <title>Determinants of anion-proton coupling in mammalian endosomal CLC proteins.</title>
        <authorList>
            <person name="Zdebik A.A."/>
            <person name="Zifarelli G."/>
            <person name="Bergsdorf E.-Y."/>
            <person name="Soliani P."/>
            <person name="Scheel O."/>
            <person name="Jentsch T.J."/>
            <person name="Pusch M."/>
        </authorList>
    </citation>
    <scope>FUNCTION</scope>
    <scope>MUTAGENESIS OF GLU-224 AND GLU-281</scope>
</reference>
<reference key="10">
    <citation type="journal article" date="2017" name="J. Biol. Chem.">
        <title>Preferential association with ClC-3 permits sorting of ClC-4 into endosomal compartments.</title>
        <authorList>
            <person name="Guzman R.E."/>
            <person name="Bungert-Pluemke S."/>
            <person name="Franzen A."/>
            <person name="Fahlke C."/>
        </authorList>
    </citation>
    <scope>FUNCTION</scope>
    <scope>SUBCELLULAR LOCATION</scope>
    <scope>SUBUNIT</scope>
</reference>
<reference key="11">
    <citation type="journal article" date="2018" name="Physiol. Rev.">
        <title>CLC Chloride Channels and Transporters: Structure, Function, Physiology, and Disease.</title>
        <authorList>
            <person name="Jentsch T.J."/>
            <person name="Pusch M."/>
        </authorList>
    </citation>
    <scope>REVIEW</scope>
</reference>
<reference key="12">
    <citation type="journal article" date="2013" name="Epilepsia">
        <title>Exome sequencing reveals new causal mutations in children with epileptic encephalopathies.</title>
        <authorList>
            <person name="Veeramah K.R."/>
            <person name="Johnstone L."/>
            <person name="Karafet T.M."/>
            <person name="Wolf D."/>
            <person name="Sprissler R."/>
            <person name="Salogiannis J."/>
            <person name="Barth-Maron A."/>
            <person name="Greenberg M.E."/>
            <person name="Stuhlmann T."/>
            <person name="Weinert S."/>
            <person name="Jentsch T.J."/>
            <person name="Pazzi M."/>
            <person name="Restifo L.L."/>
            <person name="Talwar D."/>
            <person name="Erickson R.P."/>
            <person name="Hammer M.F."/>
        </authorList>
    </citation>
    <scope>FUNCTION</scope>
    <scope>SUBCELLULAR LOCATION</scope>
    <scope>INVOLVEMENT IN MRXSRC</scope>
    <scope>VARIANT MRXSRC ARG-544</scope>
    <scope>CHARACTERIZATION OF VARIANT MRXSRC ARG-544</scope>
</reference>
<reference key="13">
    <citation type="journal article" date="2015" name="Hum. Mol. Genet.">
        <title>Increased burden of de novo predicted deleterious variants in complex congenital diaphragmatic hernia.</title>
        <authorList>
            <person name="Yu L."/>
            <person name="Sawle A.D."/>
            <person name="Wynn J."/>
            <person name="Aspelund G."/>
            <person name="Stolar C.J."/>
            <person name="Arkovitz M.S."/>
            <person name="Potoka D."/>
            <person name="Azarow K.S."/>
            <person name="Mychaliska G.B."/>
            <person name="Shen Y."/>
            <person name="Chung W.K."/>
        </authorList>
    </citation>
    <scope>VARIANT ASN-15</scope>
</reference>
<reference key="14">
    <citation type="journal article" date="2018" name="Mol. Psychiatry">
        <title>De novo and inherited mutations in the X-linked gene CLCN4 are associated with syndromic intellectual disability and behavior and seizure disorders in males and females.</title>
        <authorList>
            <consortium name="DDD Study"/>
            <person name="Palmer E.E."/>
            <person name="Stuhlmann T."/>
            <person name="Weinert S."/>
            <person name="Haan E."/>
            <person name="Van Esch H."/>
            <person name="Holvoet M."/>
            <person name="Boyle J."/>
            <person name="Leffler M."/>
            <person name="Raynaud M."/>
            <person name="Moraine C."/>
            <person name="van Bokhoven H."/>
            <person name="Kleefstra T."/>
            <person name="Kahrizi K."/>
            <person name="Najmabadi H."/>
            <person name="Ropers H.H."/>
            <person name="Delgado M.R."/>
            <person name="Sirsi D."/>
            <person name="Golla S."/>
            <person name="Sommer A."/>
            <person name="Pietryga M.P."/>
            <person name="Chung W.K."/>
            <person name="Wynn J."/>
            <person name="Rohena L."/>
            <person name="Bernardo E."/>
            <person name="Hamlin D."/>
            <person name="Faux B.M."/>
            <person name="Grange D.K."/>
            <person name="Manwaring L."/>
            <person name="Tolmie J."/>
            <person name="Joss S."/>
            <person name="Cobben J.M."/>
            <person name="Duijkers F.A.M."/>
            <person name="Goehringer J.M."/>
            <person name="Challman T.D."/>
            <person name="Hennig F."/>
            <person name="Fischer U."/>
            <person name="Grimme A."/>
            <person name="Suckow V."/>
            <person name="Musante L."/>
            <person name="Nicholl J."/>
            <person name="Shaw M."/>
            <person name="Lodh S.P."/>
            <person name="Niu Z."/>
            <person name="Rosenfeld J.A."/>
            <person name="Stankiewicz P."/>
            <person name="Jentsch T.J."/>
            <person name="Gecz J."/>
            <person name="Field M."/>
            <person name="Kalscheuer V.M."/>
        </authorList>
    </citation>
    <scope>VARIANTS MRXSRC ASN-15; SER-78; GLY-212; PRO-221; VAL-221; MET-275; LEU-534; MET-536; ARG-544; VAL-555; TRP-718 AND ARG-731</scope>
    <scope>CHARACTERIZATION OF VARIANTS MRXSRC ASN-15; GLY-212; PRO-221; MET-275; LEU-534; VAL-555 AND TRP-718</scope>
    <scope>FUNCTION</scope>
    <scope>SUBCELLULAR LOCATION</scope>
</reference>
<reference key="15">
    <citation type="journal article" date="2016" name="Mol. Psychiatry">
        <title>X-exome sequencing of 405 unresolved families identifies seven novel intellectual disability genes.</title>
        <authorList>
            <person name="Hu H."/>
            <person name="Haas S.A."/>
            <person name="Chelly J."/>
            <person name="Van Esch H."/>
            <person name="Raynaud M."/>
            <person name="de Brouwer A.P."/>
            <person name="Weinert S."/>
            <person name="Froyen G."/>
            <person name="Frints S.G."/>
            <person name="Laumonnier F."/>
            <person name="Zemojtel T."/>
            <person name="Love M.I."/>
            <person name="Richard H."/>
            <person name="Emde A.K."/>
            <person name="Bienek M."/>
            <person name="Jensen C."/>
            <person name="Hambrock M."/>
            <person name="Fischer U."/>
            <person name="Langnick C."/>
            <person name="Feldkamp M."/>
            <person name="Wissink-Lindhout W."/>
            <person name="Lebrun N."/>
            <person name="Castelnau L."/>
            <person name="Rucci J."/>
            <person name="Montjean R."/>
            <person name="Dorseuil O."/>
            <person name="Billuart P."/>
            <person name="Stuhlmann T."/>
            <person name="Shaw M."/>
            <person name="Corbett M.A."/>
            <person name="Gardner A."/>
            <person name="Willis-Owen S."/>
            <person name="Tan C."/>
            <person name="Friend K.L."/>
            <person name="Belet S."/>
            <person name="van Roozendaal K.E."/>
            <person name="Jimenez-Pocquet M."/>
            <person name="Moizard M.P."/>
            <person name="Ronce N."/>
            <person name="Sun R."/>
            <person name="O'Keeffe S."/>
            <person name="Chenna R."/>
            <person name="van Boemmel A."/>
            <person name="Goeke J."/>
            <person name="Hackett A."/>
            <person name="Field M."/>
            <person name="Christie L."/>
            <person name="Boyle J."/>
            <person name="Haan E."/>
            <person name="Nelson J."/>
            <person name="Turner G."/>
            <person name="Baynam G."/>
            <person name="Gillessen-Kaesbach G."/>
            <person name="Mueller U."/>
            <person name="Steinberger D."/>
            <person name="Budny B."/>
            <person name="Badura-Stronka M."/>
            <person name="Latos-Bielenska A."/>
            <person name="Ousager L.B."/>
            <person name="Wieacker P."/>
            <person name="Rodriguez Criado G."/>
            <person name="Bondeson M.L."/>
            <person name="Anneren G."/>
            <person name="Dufke A."/>
            <person name="Cohen M."/>
            <person name="Van Maldergem L."/>
            <person name="Vincent-Delorme C."/>
            <person name="Echenne B."/>
            <person name="Simon-Bouy B."/>
            <person name="Kleefstra T."/>
            <person name="Willemsen M."/>
            <person name="Fryns J.P."/>
            <person name="Devriendt K."/>
            <person name="Ullmann R."/>
            <person name="Vingron M."/>
            <person name="Wrogemann K."/>
            <person name="Wienker T.F."/>
            <person name="Tzschach A."/>
            <person name="van Bokhoven H."/>
            <person name="Gecz J."/>
            <person name="Jentsch T.J."/>
            <person name="Chen W."/>
            <person name="Ropers H.H."/>
            <person name="Kalscheuer V.M."/>
        </authorList>
    </citation>
    <scope>FUNCTION</scope>
    <scope>INVOLVEMENT IN MRXSRC</scope>
    <scope>VARIANTS MRXSRC SER-78; VAL-221; MET-536 AND ARG-731</scope>
    <scope>CHARACTERIZATION OF VARIANTS MRXSRC SER-78; VAL-221; MET-536 AND ARG-731</scope>
</reference>
<sequence length="760" mass="84917">MVNAGAMSGSGNLMDFLDEPFPDVGTYEDFHTIDWLREKSRDTDRHRKITSKSKESIWEFIKSLLDAWSGWVVMLLIGLLAGTLAGVIDLAVDWMTDLKEGVCLSAFWYSHEQCCWTSNETTFEDRDKCPLWQKWSELLVNQSEGASAYILNYLMYILWALLFAFLAVSLVRVFAPYACGSGIPEIKTILSGFIIRGYLGKWTLLIKTVTLVLVVSSGLSLGKEGPLVHVACCCGNFFSSLFSKYSKNEGKRREVLSAAAAAGVSVAFGAPIGGVLFSLEEVSYYFPLKTLWRSFFAALVAAFTLRSINPFGNSRLVLFYVEYHTPWYMAELFPFILLGVFGGLWGTLFIRCNIAWCRRRKTTRLGKYPVLEVIVVTAITAIIAYPNPYTRQSTSELISELFNDCGALESSQLCDYINDPNMTRPVDDIPDRPAGVGVYTAMWQLALALIFKIVVTIFTFGMKIPSGLFIPSMAVGAIAGRMVGIGVEQLAYHHHDWIIFRNWCRPGADCVTPGLYAMVGAAACLGGVTRMTVSLVVIMFELTGGLEYIVPLMAAAVTSKWVADAFGKEGIYEAHIHLNGYPFLDVKDEFTHRTLATDVMRPRRGEPPLSVLTQDSMTVEDVETLIKETDYNGFPVVVSRDSERLIGFAQRRELILAIKNARQRQEGIVSNSIMYFTEEPPELPANSPHPLKLRRILNLSPFTVTDHTPMETVVDIFRKLGLRQCLVTRSGRLLGIITKKDVLRHMAQMANQDPESIMFN</sequence>